<comment type="function">
    <text evidence="3">Involved in defensive oleoresin formation in conifers in response to insect attack or other injury. Involved in sesquiterpene (C15) olefins biosynthesis. Produces mainly longifolene, but also multiple minor products including alpha-longipinene, alpha-longicyclene, E-beta-farnesene, longiborneol, cyclosativene, beta-longipinene, and 12 other sesquiterpenes when used with farnesyl diphosphate (FPP) as substrate.</text>
</comment>
<comment type="catalytic activity">
    <reaction evidence="3">
        <text>(2E,6E)-farnesyl diphosphate = longifolene + diphosphate</text>
        <dbReference type="Rhea" id="RHEA:25464"/>
        <dbReference type="ChEBI" id="CHEBI:6530"/>
        <dbReference type="ChEBI" id="CHEBI:33019"/>
        <dbReference type="ChEBI" id="CHEBI:175763"/>
        <dbReference type="EC" id="4.2.3.58"/>
    </reaction>
</comment>
<comment type="cofactor">
    <cofactor evidence="1">
        <name>Mg(2+)</name>
        <dbReference type="ChEBI" id="CHEBI:18420"/>
    </cofactor>
    <cofactor evidence="1">
        <name>Mn(2+)</name>
        <dbReference type="ChEBI" id="CHEBI:29035"/>
    </cofactor>
    <text evidence="1">Binds 3 Mg(2+) or Mn(2+) ions per subunit.</text>
</comment>
<comment type="pathway">
    <text evidence="3">Sesquiterpene biosynthesis.</text>
</comment>
<comment type="pathway">
    <text evidence="3">Terpene metabolism; oleoresin biosynthesis.</text>
</comment>
<comment type="subcellular location">
    <subcellularLocation>
        <location evidence="4">Cytoplasm</location>
    </subcellularLocation>
</comment>
<comment type="domain">
    <text evidence="1">The Asp-Asp-Xaa-Xaa-Asp/Glu (DDXXD/E) motif is important for the catalytic activity, presumably through binding to Mg(2+).</text>
</comment>
<comment type="similarity">
    <text evidence="4">Belongs to the terpene synthase family. Tpsd subfamily.</text>
</comment>
<sequence>MAQISKCSSLSAELNESSIISHHHGNLWDDDFIQSLKSSNGAPQYHERAAKLVEEIKNLVVSEMKDCNDDLIRRLQMVDIFECLGIDRHFQHEIQVALDYVYRYWNQLEGIGIGSRDSLIKDFNATALGFRALRLHRYNVSSDVLENFKNENGQFFCSSTVEEKEVRCMLTLFRASEISFPGEKVMDEAKAFTTEYLTKVLTGVDVTDVNQSLLREVKYALEFPWHCSLPRWEARSFIEICGQNDSWLKSIMNKRVLELAKLDFNILQWAHHRELQLLSSWWSQSDIAQQNFYRKRHVEFYLWVVIGTFEPEFSTCRITFAKISTLMTILDDLYDTHGTLEQLKIFTEGVKRWDLSLVDRLPDYIKITFEFFLNTSNELIAEVAKTQERDMSAYIRKTWERYLEAYLQEAEWIAARHVPTFDEYMKNGISSSGMCILNLYSLLLMGQLLPDDVLEQIHSPSKIHELVELTARLVDDSKDFETKKVGGELASGIECYVKDNPECTLEDASNHLNGLLDLTVKELNWEFVRHDSVALCFKKFAFNVARGLRLIYKYRDGFDVSNQEMKTHIFKILIDPLT</sequence>
<protein>
    <recommendedName>
        <fullName>Longifolene synthase</fullName>
        <shortName>PaTPS-Lon</shortName>
        <ecNumber>4.2.3.58</ecNumber>
    </recommendedName>
</protein>
<dbReference type="EC" id="4.2.3.58"/>
<dbReference type="EMBL" id="AF369920">
    <property type="protein sequence ID" value="AAK39129.2"/>
    <property type="molecule type" value="mRNA"/>
</dbReference>
<dbReference type="EMBL" id="AY473625">
    <property type="protein sequence ID" value="AAS47695.1"/>
    <property type="molecule type" value="mRNA"/>
</dbReference>
<dbReference type="SMR" id="Q675L0"/>
<dbReference type="KEGG" id="ag:AAS47695"/>
<dbReference type="BioCyc" id="MetaCyc:MONOMER-12770"/>
<dbReference type="BRENDA" id="4.2.3.58">
    <property type="organism ID" value="4815"/>
</dbReference>
<dbReference type="BRENDA" id="4.2.3.80">
    <property type="organism ID" value="4815"/>
</dbReference>
<dbReference type="UniPathway" id="UPA00924"/>
<dbReference type="GO" id="GO:0005737">
    <property type="term" value="C:cytoplasm"/>
    <property type="evidence" value="ECO:0007669"/>
    <property type="project" value="UniProtKB-SubCell"/>
</dbReference>
<dbReference type="GO" id="GO:0000287">
    <property type="term" value="F:magnesium ion binding"/>
    <property type="evidence" value="ECO:0007669"/>
    <property type="project" value="InterPro"/>
</dbReference>
<dbReference type="GO" id="GO:0010333">
    <property type="term" value="F:terpene synthase activity"/>
    <property type="evidence" value="ECO:0007669"/>
    <property type="project" value="InterPro"/>
</dbReference>
<dbReference type="GO" id="GO:0016102">
    <property type="term" value="P:diterpenoid biosynthetic process"/>
    <property type="evidence" value="ECO:0007669"/>
    <property type="project" value="InterPro"/>
</dbReference>
<dbReference type="GO" id="GO:0016106">
    <property type="term" value="P:sesquiterpenoid biosynthetic process"/>
    <property type="evidence" value="ECO:0000314"/>
    <property type="project" value="UniProtKB"/>
</dbReference>
<dbReference type="CDD" id="cd00684">
    <property type="entry name" value="Terpene_cyclase_plant_C1"/>
    <property type="match status" value="1"/>
</dbReference>
<dbReference type="FunFam" id="1.50.10.130:FF:000002">
    <property type="entry name" value="Ent-copalyl diphosphate synthase, chloroplastic"/>
    <property type="match status" value="1"/>
</dbReference>
<dbReference type="FunFam" id="1.10.600.10:FF:000005">
    <property type="entry name" value="Ent-kaur-16-ene synthase, chloroplastic"/>
    <property type="match status" value="1"/>
</dbReference>
<dbReference type="Gene3D" id="1.10.600.10">
    <property type="entry name" value="Farnesyl Diphosphate Synthase"/>
    <property type="match status" value="1"/>
</dbReference>
<dbReference type="Gene3D" id="1.50.10.130">
    <property type="entry name" value="Terpene synthase, N-terminal domain"/>
    <property type="match status" value="1"/>
</dbReference>
<dbReference type="InterPro" id="IPR008949">
    <property type="entry name" value="Isoprenoid_synthase_dom_sf"/>
</dbReference>
<dbReference type="InterPro" id="IPR034741">
    <property type="entry name" value="Terpene_cyclase-like_1_C"/>
</dbReference>
<dbReference type="InterPro" id="IPR044814">
    <property type="entry name" value="Terpene_cyclase_plant_C1"/>
</dbReference>
<dbReference type="InterPro" id="IPR001906">
    <property type="entry name" value="Terpene_synth_N"/>
</dbReference>
<dbReference type="InterPro" id="IPR036965">
    <property type="entry name" value="Terpene_synth_N_sf"/>
</dbReference>
<dbReference type="InterPro" id="IPR050148">
    <property type="entry name" value="Terpene_synthase-like"/>
</dbReference>
<dbReference type="InterPro" id="IPR005630">
    <property type="entry name" value="Terpene_synthase_metal-bd"/>
</dbReference>
<dbReference type="InterPro" id="IPR008930">
    <property type="entry name" value="Terpenoid_cyclase/PrenylTrfase"/>
</dbReference>
<dbReference type="PANTHER" id="PTHR31225">
    <property type="entry name" value="OS04G0344100 PROTEIN-RELATED"/>
    <property type="match status" value="1"/>
</dbReference>
<dbReference type="Pfam" id="PF01397">
    <property type="entry name" value="Terpene_synth"/>
    <property type="match status" value="1"/>
</dbReference>
<dbReference type="Pfam" id="PF03936">
    <property type="entry name" value="Terpene_synth_C"/>
    <property type="match status" value="1"/>
</dbReference>
<dbReference type="SFLD" id="SFLDS00005">
    <property type="entry name" value="Isoprenoid_Synthase_Type_I"/>
    <property type="match status" value="1"/>
</dbReference>
<dbReference type="SFLD" id="SFLDG01019">
    <property type="entry name" value="Terpene_Cyclase_Like_1_C_Termi"/>
    <property type="match status" value="1"/>
</dbReference>
<dbReference type="SFLD" id="SFLDG01014">
    <property type="entry name" value="Terpene_Cyclase_Like_1_N-term"/>
    <property type="match status" value="1"/>
</dbReference>
<dbReference type="SUPFAM" id="SSF48239">
    <property type="entry name" value="Terpenoid cyclases/Protein prenyltransferases"/>
    <property type="match status" value="1"/>
</dbReference>
<dbReference type="SUPFAM" id="SSF48576">
    <property type="entry name" value="Terpenoid synthases"/>
    <property type="match status" value="1"/>
</dbReference>
<evidence type="ECO:0000250" key="1">
    <source>
        <dbReference type="UniProtKB" id="A0A1C9J6A7"/>
    </source>
</evidence>
<evidence type="ECO:0000250" key="2">
    <source>
        <dbReference type="UniProtKB" id="Q40577"/>
    </source>
</evidence>
<evidence type="ECO:0000269" key="3">
    <source>
    </source>
</evidence>
<evidence type="ECO:0000305" key="4"/>
<proteinExistence type="evidence at protein level"/>
<name>TPSLS_PICAB</name>
<reference key="1">
    <citation type="submission" date="2002-06" db="EMBL/GenBank/DDBJ databases">
        <title>Terpene synthase from Norway spruce, cDNA isolation and characterization for gamma-humulene synthase-like gene by 5'-and 3'-RACE amplification.</title>
        <authorList>
            <person name="Morency M.J."/>
            <person name="Nicole M.C."/>
            <person name="Seguin A."/>
        </authorList>
    </citation>
    <scope>NUCLEOTIDE SEQUENCE [MRNA]</scope>
</reference>
<reference key="2">
    <citation type="journal article" date="2004" name="Plant Physiol.">
        <title>Functional characterization of nine Norway Spruce TPS genes and evolution of gymnosperm terpene synthases of the TPS-d subfamily.</title>
        <authorList>
            <person name="Martin D.M."/>
            <person name="Faeldt J."/>
            <person name="Bohlmann J."/>
        </authorList>
    </citation>
    <scope>NUCLEOTIDE SEQUENCE [MRNA]</scope>
    <scope>FUNCTION</scope>
    <scope>CATALYTIC ACTIVITY</scope>
    <scope>PATHWAY</scope>
</reference>
<feature type="chain" id="PRO_0000412237" description="Longifolene synthase">
    <location>
        <begin position="1"/>
        <end position="578"/>
    </location>
</feature>
<feature type="short sequence motif" description="DDXXD motif" evidence="1">
    <location>
        <begin position="331"/>
        <end position="335"/>
    </location>
</feature>
<feature type="binding site" evidence="2">
    <location>
        <position position="331"/>
    </location>
    <ligand>
        <name>Mg(2+)</name>
        <dbReference type="ChEBI" id="CHEBI:18420"/>
        <label>1</label>
    </ligand>
</feature>
<feature type="binding site" evidence="2">
    <location>
        <position position="331"/>
    </location>
    <ligand>
        <name>Mg(2+)</name>
        <dbReference type="ChEBI" id="CHEBI:18420"/>
        <label>2</label>
    </ligand>
</feature>
<feature type="binding site" evidence="2">
    <location>
        <position position="335"/>
    </location>
    <ligand>
        <name>Mg(2+)</name>
        <dbReference type="ChEBI" id="CHEBI:18420"/>
        <label>1</label>
    </ligand>
</feature>
<feature type="binding site" evidence="2">
    <location>
        <position position="335"/>
    </location>
    <ligand>
        <name>Mg(2+)</name>
        <dbReference type="ChEBI" id="CHEBI:18420"/>
        <label>2</label>
    </ligand>
</feature>
<feature type="binding site" evidence="2">
    <location>
        <position position="475"/>
    </location>
    <ligand>
        <name>Mg(2+)</name>
        <dbReference type="ChEBI" id="CHEBI:18420"/>
        <label>3</label>
    </ligand>
</feature>
<feature type="sequence conflict" description="In Ref. 1; AAK39129." evidence="4" ref="1">
    <original>N</original>
    <variation>D</variation>
    <location>
        <position position="210"/>
    </location>
</feature>
<feature type="sequence conflict" description="In Ref. 1; AAK39129." evidence="4" ref="1">
    <original>W</original>
    <variation>C</variation>
    <location>
        <position position="269"/>
    </location>
</feature>
<feature type="sequence conflict" description="In Ref. 1; AAK39129." evidence="4" ref="1">
    <original>S</original>
    <variation>A</variation>
    <location>
        <position position="324"/>
    </location>
</feature>
<feature type="sequence conflict" description="In Ref. 1; AAK39129." evidence="4" ref="1">
    <location>
        <position position="483"/>
    </location>
</feature>
<organism>
    <name type="scientific">Picea abies</name>
    <name type="common">Norway spruce</name>
    <name type="synonym">Picea excelsa</name>
    <dbReference type="NCBI Taxonomy" id="3329"/>
    <lineage>
        <taxon>Eukaryota</taxon>
        <taxon>Viridiplantae</taxon>
        <taxon>Streptophyta</taxon>
        <taxon>Embryophyta</taxon>
        <taxon>Tracheophyta</taxon>
        <taxon>Spermatophyta</taxon>
        <taxon>Pinopsida</taxon>
        <taxon>Pinidae</taxon>
        <taxon>Conifers I</taxon>
        <taxon>Pinales</taxon>
        <taxon>Pinaceae</taxon>
        <taxon>Picea</taxon>
    </lineage>
</organism>
<keyword id="KW-0963">Cytoplasm</keyword>
<keyword id="KW-0456">Lyase</keyword>
<keyword id="KW-0460">Magnesium</keyword>
<keyword id="KW-0479">Metal-binding</keyword>
<accession>Q675L0</accession>
<accession>Q94KA3</accession>
<gene>
    <name type="primary">TPS-Lon</name>
</gene>